<proteinExistence type="evidence at protein level"/>
<protein>
    <recommendedName>
        <fullName evidence="1">ATP synthase subunit b</fullName>
    </recommendedName>
    <alternativeName>
        <fullName evidence="1">ATP synthase F(0) sector subunit b</fullName>
    </alternativeName>
    <alternativeName>
        <fullName evidence="1">ATPase subunit I</fullName>
    </alternativeName>
    <alternativeName>
        <fullName evidence="1">F-type ATPase subunit b</fullName>
        <shortName evidence="1">F-ATPase subunit b</shortName>
    </alternativeName>
    <component>
        <recommendedName>
            <fullName>ATP synthase subunit b, processed form</fullName>
        </recommendedName>
    </component>
</protein>
<gene>
    <name evidence="1" type="primary">atpF</name>
    <name type="ordered locus">tlr0433</name>
</gene>
<evidence type="ECO:0000255" key="1">
    <source>
        <dbReference type="HAMAP-Rule" id="MF_01398"/>
    </source>
</evidence>
<evidence type="ECO:0000269" key="2">
    <source>
    </source>
</evidence>
<evidence type="ECO:0000269" key="3">
    <source>
    </source>
</evidence>
<dbReference type="EMBL" id="BA000039">
    <property type="protein sequence ID" value="BAC07985.1"/>
    <property type="molecule type" value="Genomic_DNA"/>
</dbReference>
<dbReference type="RefSeq" id="NP_681223.1">
    <property type="nucleotide sequence ID" value="NC_004113.1"/>
</dbReference>
<dbReference type="RefSeq" id="WP_011056288.1">
    <property type="nucleotide sequence ID" value="NC_004113.1"/>
</dbReference>
<dbReference type="SMR" id="Q8DLP5"/>
<dbReference type="STRING" id="197221.gene:10747022"/>
<dbReference type="EnsemblBacteria" id="BAC07985">
    <property type="protein sequence ID" value="BAC07985"/>
    <property type="gene ID" value="BAC07985"/>
</dbReference>
<dbReference type="KEGG" id="tel:tlr0433"/>
<dbReference type="PATRIC" id="fig|197221.4.peg.457"/>
<dbReference type="eggNOG" id="COG0711">
    <property type="taxonomic scope" value="Bacteria"/>
</dbReference>
<dbReference type="Proteomes" id="UP000000440">
    <property type="component" value="Chromosome"/>
</dbReference>
<dbReference type="GO" id="GO:0031676">
    <property type="term" value="C:plasma membrane-derived thylakoid membrane"/>
    <property type="evidence" value="ECO:0007669"/>
    <property type="project" value="UniProtKB-SubCell"/>
</dbReference>
<dbReference type="GO" id="GO:0045259">
    <property type="term" value="C:proton-transporting ATP synthase complex"/>
    <property type="evidence" value="ECO:0007669"/>
    <property type="project" value="UniProtKB-KW"/>
</dbReference>
<dbReference type="GO" id="GO:0046933">
    <property type="term" value="F:proton-transporting ATP synthase activity, rotational mechanism"/>
    <property type="evidence" value="ECO:0007669"/>
    <property type="project" value="UniProtKB-UniRule"/>
</dbReference>
<dbReference type="CDD" id="cd06503">
    <property type="entry name" value="ATP-synt_Fo_b"/>
    <property type="match status" value="1"/>
</dbReference>
<dbReference type="HAMAP" id="MF_01398">
    <property type="entry name" value="ATP_synth_b_bprime"/>
    <property type="match status" value="1"/>
</dbReference>
<dbReference type="InterPro" id="IPR028987">
    <property type="entry name" value="ATP_synth_B-like_membr_sf"/>
</dbReference>
<dbReference type="InterPro" id="IPR002146">
    <property type="entry name" value="ATP_synth_b/b'su_bac/chlpt"/>
</dbReference>
<dbReference type="InterPro" id="IPR005864">
    <property type="entry name" value="ATP_synth_F0_bsu_bac"/>
</dbReference>
<dbReference type="NCBIfam" id="TIGR01144">
    <property type="entry name" value="ATP_synt_b"/>
    <property type="match status" value="1"/>
</dbReference>
<dbReference type="NCBIfam" id="NF005606">
    <property type="entry name" value="PRK07352.1"/>
    <property type="match status" value="1"/>
</dbReference>
<dbReference type="PANTHER" id="PTHR34264">
    <property type="entry name" value="ATP SYNTHASE SUBUNIT B, CHLOROPLASTIC"/>
    <property type="match status" value="1"/>
</dbReference>
<dbReference type="PANTHER" id="PTHR34264:SF3">
    <property type="entry name" value="ATP SYNTHASE SUBUNIT B, CHLOROPLASTIC"/>
    <property type="match status" value="1"/>
</dbReference>
<dbReference type="Pfam" id="PF00430">
    <property type="entry name" value="ATP-synt_B"/>
    <property type="match status" value="1"/>
</dbReference>
<dbReference type="SUPFAM" id="SSF81573">
    <property type="entry name" value="F1F0 ATP synthase subunit B, membrane domain"/>
    <property type="match status" value="1"/>
</dbReference>
<reference key="1">
    <citation type="journal article" date="2002" name="DNA Res.">
        <title>Complete genome structure of the thermophilic cyanobacterium Thermosynechococcus elongatus BP-1.</title>
        <authorList>
            <person name="Nakamura Y."/>
            <person name="Kaneko T."/>
            <person name="Sato S."/>
            <person name="Ikeuchi M."/>
            <person name="Katoh H."/>
            <person name="Sasamoto S."/>
            <person name="Watanabe A."/>
            <person name="Iriguchi M."/>
            <person name="Kawashima K."/>
            <person name="Kimura T."/>
            <person name="Kishida Y."/>
            <person name="Kiyokawa C."/>
            <person name="Kohara M."/>
            <person name="Matsumoto M."/>
            <person name="Matsuno A."/>
            <person name="Nakazaki N."/>
            <person name="Shimpo S."/>
            <person name="Sugimoto M."/>
            <person name="Takeuchi C."/>
            <person name="Yamada M."/>
            <person name="Tabata S."/>
        </authorList>
    </citation>
    <scope>NUCLEOTIDE SEQUENCE [LARGE SCALE GENOMIC DNA]</scope>
    <source>
        <strain>NIES-2133 / IAM M-273 / BP-1</strain>
    </source>
</reference>
<reference key="2">
    <citation type="journal article" date="2008" name="Biochim. Biophys. Acta">
        <title>Remarkable stability of the proton translocating F1FO-ATP synthase from the thermophilic cyanobacterium Thermosynechococcus elongatus BP-1.</title>
        <authorList>
            <person name="Suhai T."/>
            <person name="Dencher N.A."/>
            <person name="Poetsch A."/>
            <person name="Seelert H."/>
        </authorList>
    </citation>
    <scope>FUNCTION</scope>
    <scope>MASS SPECTROMETRY</scope>
    <scope>SUBUNIT</scope>
    <scope>SUBCELLULAR LOCATION</scope>
    <source>
        <strain>NIES-2133 / IAM M-273 / BP-1</strain>
    </source>
</reference>
<reference key="3">
    <citation type="journal article" date="2010" name="J. Biol. Chem.">
        <title>Crystal structure of monomeric photosystem II from Thermosynechococcus elongatus at 3.6 A resolution.</title>
        <authorList>
            <person name="Broser M."/>
            <person name="Gabdulkhakov A."/>
            <person name="Kern J."/>
            <person name="Guskov A."/>
            <person name="Muh F."/>
            <person name="Saenger W."/>
            <person name="Zouni A."/>
        </authorList>
    </citation>
    <scope>SUBUNIT</scope>
    <scope>SUBCELLULAR LOCATION</scope>
    <scope>MASS SPECTROMETRY</scope>
    <source>
        <strain>NIES-2133 / IAM M-273 / BP-1</strain>
    </source>
</reference>
<accession>Q8DLP5</accession>
<keyword id="KW-0066">ATP synthesis</keyword>
<keyword id="KW-0138">CF(0)</keyword>
<keyword id="KW-0375">Hydrogen ion transport</keyword>
<keyword id="KW-0406">Ion transport</keyword>
<keyword id="KW-0472">Membrane</keyword>
<keyword id="KW-1185">Reference proteome</keyword>
<keyword id="KW-0793">Thylakoid</keyword>
<keyword id="KW-0812">Transmembrane</keyword>
<keyword id="KW-1133">Transmembrane helix</keyword>
<keyword id="KW-0813">Transport</keyword>
<name>ATPF_THEVB</name>
<organism>
    <name type="scientific">Thermosynechococcus vestitus (strain NIES-2133 / IAM M-273 / BP-1)</name>
    <dbReference type="NCBI Taxonomy" id="197221"/>
    <lineage>
        <taxon>Bacteria</taxon>
        <taxon>Bacillati</taxon>
        <taxon>Cyanobacteriota</taxon>
        <taxon>Cyanophyceae</taxon>
        <taxon>Acaryochloridales</taxon>
        <taxon>Thermosynechococcaceae</taxon>
        <taxon>Thermosynechococcus</taxon>
    </lineage>
</organism>
<comment type="function">
    <text evidence="1 2">F(1)F(0) ATP synthase produces ATP from ADP in the presence of a proton or sodium gradient. F-type ATPases consist of two structural domains, F(1) containing the extramembraneous catalytic core and F(0) containing the membrane proton channel, linked together by a central stalk and a peripheral stalk. During catalysis, ATP synthesis in the catalytic domain of F(1) is coupled via a rotary mechanism of the central stalk subunits to proton translocation.</text>
</comment>
<comment type="function">
    <text evidence="1">Component of the F(0) channel, it forms part of the peripheral stalk, linking F(1) to F(0).</text>
</comment>
<comment type="function">
    <text evidence="2">The complex from the organism is particularly stable to disruption and remains functional after 6 hrs at 55 degrees Celsius.</text>
</comment>
<comment type="subunit">
    <text evidence="1 2 3">F-type ATPases have 2 components, F(1) - the catalytic core - and F(0) - the membrane proton channel. F(1) has five subunits: alpha(3), beta(3), gamma(1), delta(1), epsilon(1). F(0) has four main subunits: a(1), b(1), b'(1) and c(10-14). The alpha and beta chains form an alternating ring which encloses part of the gamma chain. F(1) is attached to F(0) by a central stalk formed by the gamma and epsilon chains, while a peripheral stalk is formed by the delta, b and b' chains.</text>
</comment>
<comment type="subcellular location">
    <subcellularLocation>
        <location evidence="1 2 3">Cellular thylakoid membrane</location>
        <topology evidence="1">Single-pass membrane protein</topology>
    </subcellularLocation>
</comment>
<comment type="mass spectrometry">
    <molecule>ATP synthase subunit b</molecule>
</comment>
<comment type="mass spectrometry">
    <molecule>ATP synthase subunit b, processed form</molecule>
</comment>
<comment type="similarity">
    <text evidence="1">Belongs to the ATPase B chain family.</text>
</comment>
<feature type="chain" id="PRO_0000368841" description="ATP synthase subunit b">
    <location>
        <begin position="1"/>
        <end position="179"/>
    </location>
</feature>
<feature type="chain" id="PRO_0000430773" description="ATP synthase subunit b, processed form">
    <location>
        <begin position="13"/>
        <end position="179"/>
    </location>
</feature>
<feature type="transmembrane region" description="Helical" evidence="1">
    <location>
        <begin position="29"/>
        <end position="48"/>
    </location>
</feature>
<sequence>MSVMDALFLLATEEVGHFGINTNLLETNVINLAILIGVLVYFGRGVLGKTLGDRQKQIATAIAEAEERQKVAAARLAEAQQKLTQAKQEAQRIREDALTRAKAVKEEIIAQAKREIERLQETASQDTSAATERAIAEIRERIAAMALAEAENQLKARLSQNPDLQRTLIDRSIALLGGK</sequence>